<feature type="chain" id="PRO_0000359320" description="5'-methylthioadenosine/S-adenosylhomocysteine nucleosidase">
    <location>
        <begin position="1"/>
        <end position="229"/>
    </location>
</feature>
<feature type="active site" description="Proton acceptor" evidence="1">
    <location>
        <position position="12"/>
    </location>
</feature>
<feature type="active site" description="Proton donor" evidence="1">
    <location>
        <position position="197"/>
    </location>
</feature>
<feature type="binding site" evidence="1">
    <location>
        <position position="78"/>
    </location>
    <ligand>
        <name>substrate</name>
    </ligand>
</feature>
<feature type="binding site" evidence="1">
    <location>
        <position position="152"/>
    </location>
    <ligand>
        <name>substrate</name>
    </ligand>
</feature>
<feature type="binding site" evidence="1">
    <location>
        <begin position="173"/>
        <end position="174"/>
    </location>
    <ligand>
        <name>substrate</name>
    </ligand>
</feature>
<organism>
    <name type="scientific">Pasteurella multocida (strain Pm70)</name>
    <dbReference type="NCBI Taxonomy" id="272843"/>
    <lineage>
        <taxon>Bacteria</taxon>
        <taxon>Pseudomonadati</taxon>
        <taxon>Pseudomonadota</taxon>
        <taxon>Gammaproteobacteria</taxon>
        <taxon>Pasteurellales</taxon>
        <taxon>Pasteurellaceae</taxon>
        <taxon>Pasteurella</taxon>
    </lineage>
</organism>
<reference key="1">
    <citation type="journal article" date="2001" name="Proc. Natl. Acad. Sci. U.S.A.">
        <title>Complete genomic sequence of Pasteurella multocida Pm70.</title>
        <authorList>
            <person name="May B.J."/>
            <person name="Zhang Q."/>
            <person name="Li L.L."/>
            <person name="Paustian M.L."/>
            <person name="Whittam T.S."/>
            <person name="Kapur V."/>
        </authorList>
    </citation>
    <scope>NUCLEOTIDE SEQUENCE [LARGE SCALE GENOMIC DNA]</scope>
    <source>
        <strain>Pm70</strain>
    </source>
</reference>
<evidence type="ECO:0000255" key="1">
    <source>
        <dbReference type="HAMAP-Rule" id="MF_01684"/>
    </source>
</evidence>
<gene>
    <name evidence="1" type="primary">mtnN</name>
    <name type="ordered locus">PM0194</name>
</gene>
<proteinExistence type="inferred from homology"/>
<accession>Q9CP62</accession>
<comment type="function">
    <text evidence="1">Catalyzes the irreversible cleavage of the glycosidic bond in both 5'-methylthioadenosine (MTA) and S-adenosylhomocysteine (SAH/AdoHcy) to adenine and the corresponding thioribose, 5'-methylthioribose and S-ribosylhomocysteine, respectively. Also cleaves 5'-deoxyadenosine, a toxic by-product of radical S-adenosylmethionine (SAM) enzymes, into 5-deoxyribose and adenine.</text>
</comment>
<comment type="catalytic activity">
    <reaction evidence="1">
        <text>S-adenosyl-L-homocysteine + H2O = S-(5-deoxy-D-ribos-5-yl)-L-homocysteine + adenine</text>
        <dbReference type="Rhea" id="RHEA:17805"/>
        <dbReference type="ChEBI" id="CHEBI:15377"/>
        <dbReference type="ChEBI" id="CHEBI:16708"/>
        <dbReference type="ChEBI" id="CHEBI:57856"/>
        <dbReference type="ChEBI" id="CHEBI:58195"/>
        <dbReference type="EC" id="3.2.2.9"/>
    </reaction>
</comment>
<comment type="catalytic activity">
    <reaction evidence="1">
        <text>S-methyl-5'-thioadenosine + H2O = 5-(methylsulfanyl)-D-ribose + adenine</text>
        <dbReference type="Rhea" id="RHEA:13617"/>
        <dbReference type="ChEBI" id="CHEBI:15377"/>
        <dbReference type="ChEBI" id="CHEBI:16708"/>
        <dbReference type="ChEBI" id="CHEBI:17509"/>
        <dbReference type="ChEBI" id="CHEBI:78440"/>
        <dbReference type="EC" id="3.2.2.9"/>
    </reaction>
</comment>
<comment type="catalytic activity">
    <reaction evidence="1">
        <text>5'-deoxyadenosine + H2O = 5-deoxy-D-ribose + adenine</text>
        <dbReference type="Rhea" id="RHEA:29859"/>
        <dbReference type="ChEBI" id="CHEBI:15377"/>
        <dbReference type="ChEBI" id="CHEBI:16708"/>
        <dbReference type="ChEBI" id="CHEBI:17319"/>
        <dbReference type="ChEBI" id="CHEBI:149540"/>
        <dbReference type="EC" id="3.2.2.9"/>
    </reaction>
    <physiologicalReaction direction="left-to-right" evidence="1">
        <dbReference type="Rhea" id="RHEA:29860"/>
    </physiologicalReaction>
</comment>
<comment type="pathway">
    <text evidence="1">Amino-acid biosynthesis; L-methionine biosynthesis via salvage pathway; S-methyl-5-thio-alpha-D-ribose 1-phosphate from S-methyl-5'-thioadenosine (hydrolase route): step 1/2.</text>
</comment>
<comment type="similarity">
    <text evidence="1">Belongs to the PNP/UDP phosphorylase family. MtnN subfamily.</text>
</comment>
<dbReference type="EC" id="3.2.2.9" evidence="1"/>
<dbReference type="EMBL" id="AE004439">
    <property type="protein sequence ID" value="AAK02278.1"/>
    <property type="molecule type" value="Genomic_DNA"/>
</dbReference>
<dbReference type="RefSeq" id="WP_010906521.1">
    <property type="nucleotide sequence ID" value="NC_002663.1"/>
</dbReference>
<dbReference type="SMR" id="Q9CP62"/>
<dbReference type="STRING" id="272843.PM0194"/>
<dbReference type="EnsemblBacteria" id="AAK02278">
    <property type="protein sequence ID" value="AAK02278"/>
    <property type="gene ID" value="PM0194"/>
</dbReference>
<dbReference type="KEGG" id="pmu:PM0194"/>
<dbReference type="HOGENOM" id="CLU_031248_2_2_6"/>
<dbReference type="OrthoDB" id="9792278at2"/>
<dbReference type="UniPathway" id="UPA00904">
    <property type="reaction ID" value="UER00871"/>
</dbReference>
<dbReference type="Proteomes" id="UP000000809">
    <property type="component" value="Chromosome"/>
</dbReference>
<dbReference type="GO" id="GO:0005829">
    <property type="term" value="C:cytosol"/>
    <property type="evidence" value="ECO:0007669"/>
    <property type="project" value="TreeGrafter"/>
</dbReference>
<dbReference type="GO" id="GO:0008782">
    <property type="term" value="F:adenosylhomocysteine nucleosidase activity"/>
    <property type="evidence" value="ECO:0007669"/>
    <property type="project" value="UniProtKB-UniRule"/>
</dbReference>
<dbReference type="GO" id="GO:0008930">
    <property type="term" value="F:methylthioadenosine nucleosidase activity"/>
    <property type="evidence" value="ECO:0007669"/>
    <property type="project" value="UniProtKB-UniRule"/>
</dbReference>
<dbReference type="GO" id="GO:0019509">
    <property type="term" value="P:L-methionine salvage from methylthioadenosine"/>
    <property type="evidence" value="ECO:0007669"/>
    <property type="project" value="UniProtKB-UniRule"/>
</dbReference>
<dbReference type="GO" id="GO:0019284">
    <property type="term" value="P:L-methionine salvage from S-adenosylmethionine"/>
    <property type="evidence" value="ECO:0007669"/>
    <property type="project" value="TreeGrafter"/>
</dbReference>
<dbReference type="GO" id="GO:0009164">
    <property type="term" value="P:nucleoside catabolic process"/>
    <property type="evidence" value="ECO:0007669"/>
    <property type="project" value="InterPro"/>
</dbReference>
<dbReference type="CDD" id="cd09008">
    <property type="entry name" value="MTAN"/>
    <property type="match status" value="1"/>
</dbReference>
<dbReference type="FunFam" id="3.40.50.1580:FF:000001">
    <property type="entry name" value="MTA/SAH nucleosidase family protein"/>
    <property type="match status" value="1"/>
</dbReference>
<dbReference type="Gene3D" id="3.40.50.1580">
    <property type="entry name" value="Nucleoside phosphorylase domain"/>
    <property type="match status" value="1"/>
</dbReference>
<dbReference type="HAMAP" id="MF_01684">
    <property type="entry name" value="Salvage_MtnN"/>
    <property type="match status" value="1"/>
</dbReference>
<dbReference type="InterPro" id="IPR010049">
    <property type="entry name" value="MTA_SAH_Nsdase"/>
</dbReference>
<dbReference type="InterPro" id="IPR000845">
    <property type="entry name" value="Nucleoside_phosphorylase_d"/>
</dbReference>
<dbReference type="InterPro" id="IPR035994">
    <property type="entry name" value="Nucleoside_phosphorylase_sf"/>
</dbReference>
<dbReference type="NCBIfam" id="TIGR01704">
    <property type="entry name" value="MTA_SAH-Nsdase"/>
    <property type="match status" value="1"/>
</dbReference>
<dbReference type="NCBIfam" id="NF004079">
    <property type="entry name" value="PRK05584.1"/>
    <property type="match status" value="1"/>
</dbReference>
<dbReference type="PANTHER" id="PTHR46832">
    <property type="entry name" value="5'-METHYLTHIOADENOSINE/S-ADENOSYLHOMOCYSTEINE NUCLEOSIDASE"/>
    <property type="match status" value="1"/>
</dbReference>
<dbReference type="PANTHER" id="PTHR46832:SF1">
    <property type="entry name" value="5'-METHYLTHIOADENOSINE_S-ADENOSYLHOMOCYSTEINE NUCLEOSIDASE"/>
    <property type="match status" value="1"/>
</dbReference>
<dbReference type="Pfam" id="PF01048">
    <property type="entry name" value="PNP_UDP_1"/>
    <property type="match status" value="1"/>
</dbReference>
<dbReference type="SUPFAM" id="SSF53167">
    <property type="entry name" value="Purine and uridine phosphorylases"/>
    <property type="match status" value="1"/>
</dbReference>
<keyword id="KW-0028">Amino-acid biosynthesis</keyword>
<keyword id="KW-0378">Hydrolase</keyword>
<keyword id="KW-0486">Methionine biosynthesis</keyword>
<keyword id="KW-1185">Reference proteome</keyword>
<name>MTNN_PASMU</name>
<sequence length="229" mass="24065">MKIGIVGAMAQEVQMLADLMQDKRVTQVASCTIYEGMIHGKAVALLQSGIGKVAAAIGATLLLEMCKPDLVINTGSAGGVATGLNVGDIVISDETVYHDADVTAFGYAKGQLPACPARFQSDEKLVQLAEKIAVQQQQQVKRGLICSGDSFIQGGTPLAQIKADFPTVMAVEMEATAIAQVCHAFNVPFVVVRAISDSGDGEASMSFEEFLPLAAKQSSAMVLEMIDNL</sequence>
<protein>
    <recommendedName>
        <fullName evidence="1">5'-methylthioadenosine/S-adenosylhomocysteine nucleosidase</fullName>
        <shortName evidence="1">MTA/SAH nucleosidase</shortName>
        <shortName evidence="1">MTAN</shortName>
        <ecNumber evidence="1">3.2.2.9</ecNumber>
    </recommendedName>
    <alternativeName>
        <fullName evidence="1">5'-deoxyadenosine nucleosidase</fullName>
        <shortName evidence="1">DOA nucleosidase</shortName>
        <shortName evidence="1">dAdo nucleosidase</shortName>
    </alternativeName>
    <alternativeName>
        <fullName evidence="1">5'-methylthioadenosine nucleosidase</fullName>
        <shortName evidence="1">MTA nucleosidase</shortName>
    </alternativeName>
    <alternativeName>
        <fullName evidence="1">S-adenosylhomocysteine nucleosidase</fullName>
        <shortName evidence="1">AdoHcy nucleosidase</shortName>
        <shortName evidence="1">SAH nucleosidase</shortName>
        <shortName evidence="1">SRH nucleosidase</shortName>
    </alternativeName>
</protein>